<sequence>MQVSLETTSGLERRLTVGVPAEQVENEVENRLKQAARNVTIKGFRKGKVPLSVVKQRFGAGIRQEVVGDVINRSFYAAVQKENLKPAGQPSIQPKQLSAGQDLEYIAVFEVYPSVELSDLSVFEITRHKAEVTDVDVDNMIDVLRKHQATWTQVERAAADGDQVNINFVGTKDGVEFAGGKADNQNLILGSNSMIPGFEAGLVGLKSGDQKTLALTFPEDYHSEELKGAAVEFAVTVNSVSEAVLPELNKEFFQKFGVEKGGEKQFRKEVKANMERELGNALKAKVKGQVMDALVASHTVDVPKALVANEIQVLRNQMLQRFGGQQQNFDVKSLLPDTMFQEEASRRVTLGLIVGEIVKSAKLKPDAKRIKSMIEEIASTYQEPQEVIDYYNSNQELLAGVESAVLEDQVVDHILSKAKVSDVDSTYDDVIKSKAQR</sequence>
<name>TIG_CELJU</name>
<protein>
    <recommendedName>
        <fullName evidence="1">Trigger factor</fullName>
        <shortName evidence="1">TF</shortName>
        <ecNumber evidence="1">5.2.1.8</ecNumber>
    </recommendedName>
    <alternativeName>
        <fullName evidence="1">PPIase</fullName>
    </alternativeName>
</protein>
<proteinExistence type="inferred from homology"/>
<accession>B3PHK7</accession>
<dbReference type="EC" id="5.2.1.8" evidence="1"/>
<dbReference type="EMBL" id="CP000934">
    <property type="protein sequence ID" value="ACE83430.1"/>
    <property type="molecule type" value="Genomic_DNA"/>
</dbReference>
<dbReference type="RefSeq" id="WP_012487616.1">
    <property type="nucleotide sequence ID" value="NC_010995.1"/>
</dbReference>
<dbReference type="SMR" id="B3PHK7"/>
<dbReference type="STRING" id="498211.CJA_2007"/>
<dbReference type="KEGG" id="cja:CJA_2007"/>
<dbReference type="eggNOG" id="COG0544">
    <property type="taxonomic scope" value="Bacteria"/>
</dbReference>
<dbReference type="HOGENOM" id="CLU_033058_2_0_6"/>
<dbReference type="OrthoDB" id="9767721at2"/>
<dbReference type="Proteomes" id="UP000001036">
    <property type="component" value="Chromosome"/>
</dbReference>
<dbReference type="GO" id="GO:0005737">
    <property type="term" value="C:cytoplasm"/>
    <property type="evidence" value="ECO:0007669"/>
    <property type="project" value="UniProtKB-SubCell"/>
</dbReference>
<dbReference type="GO" id="GO:0003755">
    <property type="term" value="F:peptidyl-prolyl cis-trans isomerase activity"/>
    <property type="evidence" value="ECO:0007669"/>
    <property type="project" value="UniProtKB-UniRule"/>
</dbReference>
<dbReference type="GO" id="GO:0044183">
    <property type="term" value="F:protein folding chaperone"/>
    <property type="evidence" value="ECO:0007669"/>
    <property type="project" value="TreeGrafter"/>
</dbReference>
<dbReference type="GO" id="GO:0043022">
    <property type="term" value="F:ribosome binding"/>
    <property type="evidence" value="ECO:0007669"/>
    <property type="project" value="TreeGrafter"/>
</dbReference>
<dbReference type="GO" id="GO:0051083">
    <property type="term" value="P:'de novo' cotranslational protein folding"/>
    <property type="evidence" value="ECO:0007669"/>
    <property type="project" value="TreeGrafter"/>
</dbReference>
<dbReference type="GO" id="GO:0051301">
    <property type="term" value="P:cell division"/>
    <property type="evidence" value="ECO:0007669"/>
    <property type="project" value="UniProtKB-KW"/>
</dbReference>
<dbReference type="GO" id="GO:0061077">
    <property type="term" value="P:chaperone-mediated protein folding"/>
    <property type="evidence" value="ECO:0007669"/>
    <property type="project" value="TreeGrafter"/>
</dbReference>
<dbReference type="GO" id="GO:0015031">
    <property type="term" value="P:protein transport"/>
    <property type="evidence" value="ECO:0007669"/>
    <property type="project" value="UniProtKB-UniRule"/>
</dbReference>
<dbReference type="GO" id="GO:0043335">
    <property type="term" value="P:protein unfolding"/>
    <property type="evidence" value="ECO:0007669"/>
    <property type="project" value="TreeGrafter"/>
</dbReference>
<dbReference type="FunFam" id="3.10.50.40:FF:000001">
    <property type="entry name" value="Trigger factor"/>
    <property type="match status" value="1"/>
</dbReference>
<dbReference type="Gene3D" id="3.10.50.40">
    <property type="match status" value="1"/>
</dbReference>
<dbReference type="Gene3D" id="3.30.70.1050">
    <property type="entry name" value="Trigger factor ribosome-binding domain"/>
    <property type="match status" value="1"/>
</dbReference>
<dbReference type="Gene3D" id="1.10.3120.10">
    <property type="entry name" value="Trigger factor, C-terminal domain"/>
    <property type="match status" value="1"/>
</dbReference>
<dbReference type="HAMAP" id="MF_00303">
    <property type="entry name" value="Trigger_factor_Tig"/>
    <property type="match status" value="1"/>
</dbReference>
<dbReference type="InterPro" id="IPR046357">
    <property type="entry name" value="PPIase_dom_sf"/>
</dbReference>
<dbReference type="InterPro" id="IPR001179">
    <property type="entry name" value="PPIase_FKBP_dom"/>
</dbReference>
<dbReference type="InterPro" id="IPR005215">
    <property type="entry name" value="Trig_fac"/>
</dbReference>
<dbReference type="InterPro" id="IPR008880">
    <property type="entry name" value="Trigger_fac_C"/>
</dbReference>
<dbReference type="InterPro" id="IPR037041">
    <property type="entry name" value="Trigger_fac_C_sf"/>
</dbReference>
<dbReference type="InterPro" id="IPR008881">
    <property type="entry name" value="Trigger_fac_ribosome-bd_bac"/>
</dbReference>
<dbReference type="InterPro" id="IPR036611">
    <property type="entry name" value="Trigger_fac_ribosome-bd_sf"/>
</dbReference>
<dbReference type="InterPro" id="IPR027304">
    <property type="entry name" value="Trigger_fact/SurA_dom_sf"/>
</dbReference>
<dbReference type="NCBIfam" id="TIGR00115">
    <property type="entry name" value="tig"/>
    <property type="match status" value="1"/>
</dbReference>
<dbReference type="PANTHER" id="PTHR30560">
    <property type="entry name" value="TRIGGER FACTOR CHAPERONE AND PEPTIDYL-PROLYL CIS/TRANS ISOMERASE"/>
    <property type="match status" value="1"/>
</dbReference>
<dbReference type="PANTHER" id="PTHR30560:SF3">
    <property type="entry name" value="TRIGGER FACTOR-LIKE PROTEIN TIG, CHLOROPLASTIC"/>
    <property type="match status" value="1"/>
</dbReference>
<dbReference type="Pfam" id="PF00254">
    <property type="entry name" value="FKBP_C"/>
    <property type="match status" value="1"/>
</dbReference>
<dbReference type="Pfam" id="PF05698">
    <property type="entry name" value="Trigger_C"/>
    <property type="match status" value="1"/>
</dbReference>
<dbReference type="Pfam" id="PF05697">
    <property type="entry name" value="Trigger_N"/>
    <property type="match status" value="1"/>
</dbReference>
<dbReference type="PIRSF" id="PIRSF003095">
    <property type="entry name" value="Trigger_factor"/>
    <property type="match status" value="1"/>
</dbReference>
<dbReference type="SUPFAM" id="SSF54534">
    <property type="entry name" value="FKBP-like"/>
    <property type="match status" value="1"/>
</dbReference>
<dbReference type="SUPFAM" id="SSF109998">
    <property type="entry name" value="Triger factor/SurA peptide-binding domain-like"/>
    <property type="match status" value="1"/>
</dbReference>
<dbReference type="SUPFAM" id="SSF102735">
    <property type="entry name" value="Trigger factor ribosome-binding domain"/>
    <property type="match status" value="1"/>
</dbReference>
<dbReference type="PROSITE" id="PS50059">
    <property type="entry name" value="FKBP_PPIASE"/>
    <property type="match status" value="1"/>
</dbReference>
<reference key="1">
    <citation type="journal article" date="2008" name="J. Bacteriol.">
        <title>Insights into plant cell wall degradation from the genome sequence of the soil bacterium Cellvibrio japonicus.</title>
        <authorList>
            <person name="DeBoy R.T."/>
            <person name="Mongodin E.F."/>
            <person name="Fouts D.E."/>
            <person name="Tailford L.E."/>
            <person name="Khouri H."/>
            <person name="Emerson J.B."/>
            <person name="Mohamoud Y."/>
            <person name="Watkins K."/>
            <person name="Henrissat B."/>
            <person name="Gilbert H.J."/>
            <person name="Nelson K.E."/>
        </authorList>
    </citation>
    <scope>NUCLEOTIDE SEQUENCE [LARGE SCALE GENOMIC DNA]</scope>
    <source>
        <strain>Ueda107</strain>
    </source>
</reference>
<gene>
    <name evidence="1" type="primary">tig</name>
    <name type="ordered locus">CJA_2007</name>
</gene>
<evidence type="ECO:0000255" key="1">
    <source>
        <dbReference type="HAMAP-Rule" id="MF_00303"/>
    </source>
</evidence>
<organism>
    <name type="scientific">Cellvibrio japonicus (strain Ueda107)</name>
    <name type="common">Pseudomonas fluorescens subsp. cellulosa</name>
    <dbReference type="NCBI Taxonomy" id="498211"/>
    <lineage>
        <taxon>Bacteria</taxon>
        <taxon>Pseudomonadati</taxon>
        <taxon>Pseudomonadota</taxon>
        <taxon>Gammaproteobacteria</taxon>
        <taxon>Cellvibrionales</taxon>
        <taxon>Cellvibrionaceae</taxon>
        <taxon>Cellvibrio</taxon>
    </lineage>
</organism>
<feature type="chain" id="PRO_1000115513" description="Trigger factor">
    <location>
        <begin position="1"/>
        <end position="437"/>
    </location>
</feature>
<feature type="domain" description="PPIase FKBP-type" evidence="1">
    <location>
        <begin position="161"/>
        <end position="246"/>
    </location>
</feature>
<keyword id="KW-0131">Cell cycle</keyword>
<keyword id="KW-0132">Cell division</keyword>
<keyword id="KW-0143">Chaperone</keyword>
<keyword id="KW-0963">Cytoplasm</keyword>
<keyword id="KW-0413">Isomerase</keyword>
<keyword id="KW-1185">Reference proteome</keyword>
<keyword id="KW-0697">Rotamase</keyword>
<comment type="function">
    <text evidence="1">Involved in protein export. Acts as a chaperone by maintaining the newly synthesized protein in an open conformation. Functions as a peptidyl-prolyl cis-trans isomerase.</text>
</comment>
<comment type="catalytic activity">
    <reaction evidence="1">
        <text>[protein]-peptidylproline (omega=180) = [protein]-peptidylproline (omega=0)</text>
        <dbReference type="Rhea" id="RHEA:16237"/>
        <dbReference type="Rhea" id="RHEA-COMP:10747"/>
        <dbReference type="Rhea" id="RHEA-COMP:10748"/>
        <dbReference type="ChEBI" id="CHEBI:83833"/>
        <dbReference type="ChEBI" id="CHEBI:83834"/>
        <dbReference type="EC" id="5.2.1.8"/>
    </reaction>
</comment>
<comment type="subcellular location">
    <subcellularLocation>
        <location>Cytoplasm</location>
    </subcellularLocation>
    <text evidence="1">About half TF is bound to the ribosome near the polypeptide exit tunnel while the other half is free in the cytoplasm.</text>
</comment>
<comment type="domain">
    <text evidence="1">Consists of 3 domains; the N-terminus binds the ribosome, the middle domain has PPIase activity, while the C-terminus has intrinsic chaperone activity on its own.</text>
</comment>
<comment type="similarity">
    <text evidence="1">Belongs to the FKBP-type PPIase family. Tig subfamily.</text>
</comment>